<accession>P23726</accession>
<accession>Q17QY7</accession>
<organism>
    <name type="scientific">Bos taurus</name>
    <name type="common">Bovine</name>
    <dbReference type="NCBI Taxonomy" id="9913"/>
    <lineage>
        <taxon>Eukaryota</taxon>
        <taxon>Metazoa</taxon>
        <taxon>Chordata</taxon>
        <taxon>Craniata</taxon>
        <taxon>Vertebrata</taxon>
        <taxon>Euteleostomi</taxon>
        <taxon>Mammalia</taxon>
        <taxon>Eutheria</taxon>
        <taxon>Laurasiatheria</taxon>
        <taxon>Artiodactyla</taxon>
        <taxon>Ruminantia</taxon>
        <taxon>Pecora</taxon>
        <taxon>Bovidae</taxon>
        <taxon>Bovinae</taxon>
        <taxon>Bos</taxon>
    </lineage>
</organism>
<reference key="1">
    <citation type="journal article" date="1991" name="Cell">
        <title>Characterization of two 85 kd proteins that associate with receptor tyrosine kinases, middle-T/pp60c-src complexes, and PI3-kinase.</title>
        <authorList>
            <person name="Otsu M."/>
            <person name="Hiles I.D."/>
            <person name="Goot I."/>
            <person name="Fry M.J."/>
            <person name="Ruiz-Larrea F."/>
            <person name="Panayotou G."/>
            <person name="Thompson A."/>
            <person name="Dhand R."/>
            <person name="Hsuan J."/>
            <person name="Totty N."/>
            <person name="Smith A.D."/>
            <person name="Morgan S.J."/>
            <person name="Courtneidge S.A."/>
            <person name="Parker P.J."/>
            <person name="Waterfield M.D."/>
        </authorList>
    </citation>
    <scope>NUCLEOTIDE SEQUENCE [MRNA]</scope>
</reference>
<reference key="2">
    <citation type="submission" date="2006-06" db="EMBL/GenBank/DDBJ databases">
        <authorList>
            <consortium name="NIH - Mammalian Gene Collection (MGC) project"/>
        </authorList>
    </citation>
    <scope>NUCLEOTIDE SEQUENCE [LARGE SCALE MRNA]</scope>
    <source>
        <strain>Hereford</strain>
        <tissue>Uterus</tissue>
    </source>
</reference>
<reference key="3">
    <citation type="journal article" date="1992" name="EMBO J.">
        <title>Interaction of the p85 subunit of PI 3-kinase and its N-terminal SH2 domain with a PDGF receptor phosphorylation site: structural features and analysis of conformational changes.</title>
        <authorList>
            <person name="Panayotou G."/>
            <person name="Bax B."/>
            <person name="Gout I."/>
            <person name="Federwisch M."/>
            <person name="Wroblowski B."/>
            <person name="Dhand R."/>
            <person name="Fry M.J."/>
            <person name="Blundell T.L."/>
            <person name="Wollmer A."/>
            <person name="Waterfield M.D."/>
        </authorList>
    </citation>
    <scope>CIRCULAR DICHROISM ANALYSIS</scope>
    <scope>FLUORESCENCE SPECTROSCOPY</scope>
</reference>
<comment type="function">
    <text evidence="1 2">Regulatory subunit of phosphoinositide-3-kinase (PI3K), a kinase that phosphorylates PtdIns(4,5)P2 (Phosphatidylinositol 4,5-bisphosphate) to generate phosphatidylinositol 3,4,5-trisphosphate (PIP3). PIP3 plays a key role by recruiting PH domain-containing proteins to the membrane, including AKT1 and PDPK1, activating signaling cascades involved in cell growth, survival, proliferation, motility and morphology. Binds to activated (phosphorylated) protein-tyrosine kinases, through its SH2 domain, and acts as an adapter, mediating the association of the p110 catalytic unit to the plasma membrane. Indirectly regulates autophagy. Promotes nuclear translocation of XBP1 in a ER stress- and/or insulin-dependent manner during metabolic overloading in the liver and hence plays a role in glucose tolerance improvement (By similarity).</text>
</comment>
<comment type="subunit">
    <text evidence="1 2">Heterodimer of a regulatory subunit PIK3R2 and a p110 catalytic subunit (PIK3CA, PIK3CB or PIK3CD). Interacts with AXL. Interacts with FLT1 (tyrosine-phosphorylated) and FLT4 (tyrosine-phosphorylated). Interacts with NYAP1, NYAP2 and MYO16. Interacts with FBXL2; PIK3R2 is a substrate of the SCF(FBXL2) complex. Interacts with PTPN13; dephosphorylates PIK3R2. Interacts with XBP1; the interaction is direct and induces translocation of XBP1 into the nucleus in a ER stress- and/or insulin-dependent but PI3K-independent manner. Interacts with PIK3R1; the interaction is dissociated in an insulin-dependent manner (By similarity). Interacts with SRC (By similarity).</text>
</comment>
<comment type="interaction">
    <interactant intactId="EBI-1555978">
        <id>P23726</id>
    </interactant>
    <interactant intactId="EBI-1373130">
        <id>P32871</id>
        <label>PIK3CA</label>
    </interactant>
    <organismsDiffer>false</organismsDiffer>
    <experiments>3</experiments>
</comment>
<comment type="domain">
    <text evidence="1">The SH2 2 domain is required for interaction with FBXL2 and PTPN13.</text>
</comment>
<comment type="PTM">
    <text evidence="1">Phosphorylated in response to signaling from activated receptor-type protein kinases. Dephosphorylated by PTPRJ. Dephosphorylated at Tyr-651 by PTPN13. Phosphorylation of Tyr-651 impairs while its dephosphorylation promotes interaction with FBXL2 and SCF(FBXL2)-mediated polyubiquitination.</text>
</comment>
<comment type="PTM">
    <text evidence="1">Ubiquitinated. Polyubiquitination by the SCF(FBXL2) complex probably promotes proteasomal degradation of PIK3R2.</text>
</comment>
<comment type="similarity">
    <text evidence="7">Belongs to the PI3K p85 subunit family.</text>
</comment>
<proteinExistence type="evidence at protein level"/>
<sequence length="724" mass="81060">MAGPEGFQYRALYPFRRERPEDLELLPGDVLVVSRAALQALGVAEGNERCPQSVGWMPGLNERTRQRGDFPGTYVEFLGPVALARPGPRPRGPRPLPARPRDGPPEPGLTLPDLPEQFSPPDVAPPILVKLVEAIERTGLDSYRPEPPAVRTDWSLSDVEQWDAAALSDGVKGFLLALPAPLVTPEAAAEAHRALREAAGPVGPALEPPTLPLHHALTLRFLLQHLGRVAGRAPAPGPAVRALGATFGPLLLRAPPPPSPPPGGAPDGTEPTPDFPALLVEKLLQEHLEEQEVAPPALPPKPPKTKPAPTGLANGGSPPSLQDAEWYWGDISREEVNEKLRDTPDGTFLVRDASSKIQGEYTLTLRKGGNNKLIKVFHRDGHYGFSEPLTFCSVVDLITHYRHESLAQYNAKLDTRLLYPVSKYQQDQIVKEDSVEAVGAQLKVYHQQYQDKSREYDQLYEEYTRTSQELQMKRTAIEAFNETIKIFEEQGQTQEKCSKEYLERFRREGNEKEMQRILLNSERLKSRIAEIHESRTKLEQELRAQASDNREIDKRMNSLKPDLMQLRKIRDQYLVWLTQKGARQKKINEWLGIKNETEDQYSLMEDEDDLPHHEERTWYVGKINRTQAEEMLSGKRDGTFLIRESSQRGCYACSVVVDGDTKHCVIYRTATGFGFAEPYNLYGSLKELVLHYQHASLVQHNDALTVTLAHPVRAPGPGPPPAAR</sequence>
<name>P85B_BOVIN</name>
<protein>
    <recommendedName>
        <fullName>Phosphatidylinositol 3-kinase regulatory subunit beta</fullName>
        <shortName>PI3-kinase regulatory subunit beta</shortName>
        <shortName>PI3K regulatory subunit beta</shortName>
        <shortName>PtdIns-3-kinase regulatory subunit beta</shortName>
    </recommendedName>
    <alternativeName>
        <fullName>Phosphatidylinositol 3-kinase 85 kDa regulatory subunit beta</fullName>
        <shortName>PI3-kinase subunit p85-beta</shortName>
        <shortName>PtdIns-3-kinase regulatory subunit p85-beta</shortName>
    </alternativeName>
</protein>
<evidence type="ECO:0000250" key="1">
    <source>
        <dbReference type="UniProtKB" id="O00459"/>
    </source>
</evidence>
<evidence type="ECO:0000250" key="2">
    <source>
        <dbReference type="UniProtKB" id="O08908"/>
    </source>
</evidence>
<evidence type="ECO:0000255" key="3">
    <source>
        <dbReference type="PROSITE-ProRule" id="PRU00172"/>
    </source>
</evidence>
<evidence type="ECO:0000255" key="4">
    <source>
        <dbReference type="PROSITE-ProRule" id="PRU00191"/>
    </source>
</evidence>
<evidence type="ECO:0000255" key="5">
    <source>
        <dbReference type="PROSITE-ProRule" id="PRU00192"/>
    </source>
</evidence>
<evidence type="ECO:0000256" key="6">
    <source>
        <dbReference type="SAM" id="MobiDB-lite"/>
    </source>
</evidence>
<evidence type="ECO:0000305" key="7"/>
<evidence type="ECO:0007829" key="8">
    <source>
        <dbReference type="PDB" id="3L4Q"/>
    </source>
</evidence>
<gene>
    <name type="primary">PIK3R2</name>
</gene>
<keyword id="KW-0002">3D-structure</keyword>
<keyword id="KW-0343">GTPase activation</keyword>
<keyword id="KW-0597">Phosphoprotein</keyword>
<keyword id="KW-0653">Protein transport</keyword>
<keyword id="KW-1185">Reference proteome</keyword>
<keyword id="KW-0677">Repeat</keyword>
<keyword id="KW-0727">SH2 domain</keyword>
<keyword id="KW-0728">SH3 domain</keyword>
<keyword id="KW-0346">Stress response</keyword>
<keyword id="KW-0813">Transport</keyword>
<keyword id="KW-0832">Ubl conjugation</keyword>
<dbReference type="EMBL" id="M61746">
    <property type="protein sequence ID" value="AAA79510.1"/>
    <property type="molecule type" value="mRNA"/>
</dbReference>
<dbReference type="EMBL" id="BC118113">
    <property type="protein sequence ID" value="AAI18114.1"/>
    <property type="molecule type" value="mRNA"/>
</dbReference>
<dbReference type="PIR" id="B38749">
    <property type="entry name" value="B38749"/>
</dbReference>
<dbReference type="RefSeq" id="NP_777001.1">
    <property type="nucleotide sequence ID" value="NM_174576.2"/>
</dbReference>
<dbReference type="PDB" id="3L4Q">
    <property type="method" value="X-ray"/>
    <property type="resolution" value="2.30 A"/>
    <property type="chains" value="C/D=424-593"/>
</dbReference>
<dbReference type="PDBsum" id="3L4Q"/>
<dbReference type="BMRB" id="P23726"/>
<dbReference type="SMR" id="P23726"/>
<dbReference type="CORUM" id="P23726"/>
<dbReference type="DIP" id="DIP-39878N"/>
<dbReference type="FunCoup" id="P23726">
    <property type="interactions" value="2799"/>
</dbReference>
<dbReference type="IntAct" id="P23726">
    <property type="interactions" value="3"/>
</dbReference>
<dbReference type="MINT" id="P23726"/>
<dbReference type="STRING" id="9913.ENSBTAP00000003033"/>
<dbReference type="PaxDb" id="9913-ENSBTAP00000003033"/>
<dbReference type="GeneID" id="282308"/>
<dbReference type="KEGG" id="bta:282308"/>
<dbReference type="CTD" id="5296"/>
<dbReference type="VEuPathDB" id="HostDB:ENSBTAG00000002350"/>
<dbReference type="eggNOG" id="KOG4637">
    <property type="taxonomic scope" value="Eukaryota"/>
</dbReference>
<dbReference type="HOGENOM" id="CLU_007031_1_0_1"/>
<dbReference type="InParanoid" id="P23726"/>
<dbReference type="OMA" id="SERCPQN"/>
<dbReference type="OrthoDB" id="3175255at2759"/>
<dbReference type="TreeFam" id="TF102033"/>
<dbReference type="Reactome" id="R-BTA-109704">
    <property type="pathway name" value="PI3K Cascade"/>
</dbReference>
<dbReference type="Reactome" id="R-BTA-112399">
    <property type="pathway name" value="IRS-mediated signalling"/>
</dbReference>
<dbReference type="Reactome" id="R-BTA-114604">
    <property type="pathway name" value="GPVI-mediated activation cascade"/>
</dbReference>
<dbReference type="Reactome" id="R-BTA-1257604">
    <property type="pathway name" value="PIP3 activates AKT signaling"/>
</dbReference>
<dbReference type="Reactome" id="R-BTA-1266695">
    <property type="pathway name" value="Interleukin-7 signaling"/>
</dbReference>
<dbReference type="Reactome" id="R-BTA-1433557">
    <property type="pathway name" value="Signaling by SCF-KIT"/>
</dbReference>
<dbReference type="Reactome" id="R-BTA-1660499">
    <property type="pathway name" value="Synthesis of PIPs at the plasma membrane"/>
</dbReference>
<dbReference type="Reactome" id="R-BTA-186763">
    <property type="pathway name" value="Downstream signal transduction"/>
</dbReference>
<dbReference type="Reactome" id="R-BTA-198203">
    <property type="pathway name" value="PI3K/AKT activation"/>
</dbReference>
<dbReference type="Reactome" id="R-BTA-201556">
    <property type="pathway name" value="Signaling by ALK"/>
</dbReference>
<dbReference type="Reactome" id="R-BTA-202424">
    <property type="pathway name" value="Downstream TCR signaling"/>
</dbReference>
<dbReference type="Reactome" id="R-BTA-2029485">
    <property type="pathway name" value="Role of phospholipids in phagocytosis"/>
</dbReference>
<dbReference type="Reactome" id="R-BTA-210993">
    <property type="pathway name" value="Tie2 Signaling"/>
</dbReference>
<dbReference type="Reactome" id="R-BTA-2424491">
    <property type="pathway name" value="DAP12 signaling"/>
</dbReference>
<dbReference type="Reactome" id="R-BTA-2730905">
    <property type="pathway name" value="Role of LAT2/NTAL/LAB on calcium mobilization"/>
</dbReference>
<dbReference type="Reactome" id="R-BTA-389357">
    <property type="pathway name" value="CD28 dependent PI3K/Akt signaling"/>
</dbReference>
<dbReference type="Reactome" id="R-BTA-416476">
    <property type="pathway name" value="G alpha (q) signalling events"/>
</dbReference>
<dbReference type="Reactome" id="R-BTA-4420097">
    <property type="pathway name" value="VEGFA-VEGFR2 Pathway"/>
</dbReference>
<dbReference type="Reactome" id="R-BTA-512988">
    <property type="pathway name" value="Interleukin-3, Interleukin-5 and GM-CSF signaling"/>
</dbReference>
<dbReference type="Reactome" id="R-BTA-5673001">
    <property type="pathway name" value="RAF/MAP kinase cascade"/>
</dbReference>
<dbReference type="Reactome" id="R-BTA-6811558">
    <property type="pathway name" value="PI5P, PP2A and IER3 Regulate PI3K/AKT Signaling"/>
</dbReference>
<dbReference type="Reactome" id="R-BTA-8853659">
    <property type="pathway name" value="RET signaling"/>
</dbReference>
<dbReference type="Reactome" id="R-BTA-8980692">
    <property type="pathway name" value="RHOA GTPase cycle"/>
</dbReference>
<dbReference type="Reactome" id="R-BTA-9009391">
    <property type="pathway name" value="Extra-nuclear estrogen signaling"/>
</dbReference>
<dbReference type="Reactome" id="R-BTA-9013148">
    <property type="pathway name" value="CDC42 GTPase cycle"/>
</dbReference>
<dbReference type="Reactome" id="R-BTA-9013149">
    <property type="pathway name" value="RAC1 GTPase cycle"/>
</dbReference>
<dbReference type="Reactome" id="R-BTA-9013404">
    <property type="pathway name" value="RAC2 GTPase cycle"/>
</dbReference>
<dbReference type="Reactome" id="R-BTA-9013405">
    <property type="pathway name" value="RHOD GTPase cycle"/>
</dbReference>
<dbReference type="Reactome" id="R-BTA-9013409">
    <property type="pathway name" value="RHOJ GTPase cycle"/>
</dbReference>
<dbReference type="Reactome" id="R-BTA-9013420">
    <property type="pathway name" value="RHOU GTPase cycle"/>
</dbReference>
<dbReference type="Reactome" id="R-BTA-9013423">
    <property type="pathway name" value="RAC3 GTPase cycle"/>
</dbReference>
<dbReference type="Reactome" id="R-BTA-9035034">
    <property type="pathway name" value="RHOF GTPase cycle"/>
</dbReference>
<dbReference type="Reactome" id="R-BTA-912526">
    <property type="pathway name" value="Interleukin receptor SHC signaling"/>
</dbReference>
<dbReference type="Reactome" id="R-BTA-912631">
    <property type="pathway name" value="Regulation of signaling by CBL"/>
</dbReference>
<dbReference type="Reactome" id="R-BTA-9696264">
    <property type="pathway name" value="RND3 GTPase cycle"/>
</dbReference>
<dbReference type="Reactome" id="R-BTA-9696270">
    <property type="pathway name" value="RND2 GTPase cycle"/>
</dbReference>
<dbReference type="Reactome" id="R-BTA-9696273">
    <property type="pathway name" value="RND1 GTPase cycle"/>
</dbReference>
<dbReference type="Reactome" id="R-BTA-9927354">
    <property type="pathway name" value="Co-stimulation by ICOS"/>
</dbReference>
<dbReference type="EvolutionaryTrace" id="P23726"/>
<dbReference type="Proteomes" id="UP000009136">
    <property type="component" value="Chromosome 7"/>
</dbReference>
<dbReference type="Bgee" id="ENSBTAG00000002350">
    <property type="expression patterns" value="Expressed in Ammon's horn and 105 other cell types or tissues"/>
</dbReference>
<dbReference type="GO" id="GO:0005634">
    <property type="term" value="C:nucleus"/>
    <property type="evidence" value="ECO:0000250"/>
    <property type="project" value="UniProtKB"/>
</dbReference>
<dbReference type="GO" id="GO:0005943">
    <property type="term" value="C:phosphatidylinositol 3-kinase complex, class IA"/>
    <property type="evidence" value="ECO:0000318"/>
    <property type="project" value="GO_Central"/>
</dbReference>
<dbReference type="GO" id="GO:0046935">
    <property type="term" value="F:1-phosphatidylinositol-3-kinase regulator activity"/>
    <property type="evidence" value="ECO:0000318"/>
    <property type="project" value="GO_Central"/>
</dbReference>
<dbReference type="GO" id="GO:0032869">
    <property type="term" value="P:cellular response to insulin stimulus"/>
    <property type="evidence" value="ECO:0000250"/>
    <property type="project" value="UniProtKB"/>
</dbReference>
<dbReference type="GO" id="GO:0008286">
    <property type="term" value="P:insulin receptor signaling pathway"/>
    <property type="evidence" value="ECO:0000318"/>
    <property type="project" value="GO_Central"/>
</dbReference>
<dbReference type="GO" id="GO:0001678">
    <property type="term" value="P:intracellular glucose homeostasis"/>
    <property type="evidence" value="ECO:0000250"/>
    <property type="project" value="UniProtKB"/>
</dbReference>
<dbReference type="GO" id="GO:0043491">
    <property type="term" value="P:phosphatidylinositol 3-kinase/protein kinase B signal transduction"/>
    <property type="evidence" value="ECO:0000250"/>
    <property type="project" value="UniProtKB"/>
</dbReference>
<dbReference type="GO" id="GO:0042307">
    <property type="term" value="P:positive regulation of protein import into nucleus"/>
    <property type="evidence" value="ECO:0000250"/>
    <property type="project" value="UniProtKB"/>
</dbReference>
<dbReference type="GO" id="GO:0045944">
    <property type="term" value="P:positive regulation of transcription by RNA polymerase II"/>
    <property type="evidence" value="ECO:0000250"/>
    <property type="project" value="UniProtKB"/>
</dbReference>
<dbReference type="GO" id="GO:0015031">
    <property type="term" value="P:protein transport"/>
    <property type="evidence" value="ECO:0007669"/>
    <property type="project" value="UniProtKB-KW"/>
</dbReference>
<dbReference type="GO" id="GO:0010506">
    <property type="term" value="P:regulation of autophagy"/>
    <property type="evidence" value="ECO:0000250"/>
    <property type="project" value="UniProtKB"/>
</dbReference>
<dbReference type="GO" id="GO:0034976">
    <property type="term" value="P:response to endoplasmic reticulum stress"/>
    <property type="evidence" value="ECO:0000250"/>
    <property type="project" value="UniProtKB"/>
</dbReference>
<dbReference type="CDD" id="cd12926">
    <property type="entry name" value="iSH2_PIK3R2"/>
    <property type="match status" value="1"/>
</dbReference>
<dbReference type="CDD" id="cd09930">
    <property type="entry name" value="SH2_cSH2_p85_like"/>
    <property type="match status" value="1"/>
</dbReference>
<dbReference type="CDD" id="cd09942">
    <property type="entry name" value="SH2_nSH2_p85_like"/>
    <property type="match status" value="1"/>
</dbReference>
<dbReference type="CDD" id="cd11909">
    <property type="entry name" value="SH3_PI3K_p85beta"/>
    <property type="match status" value="1"/>
</dbReference>
<dbReference type="FunFam" id="3.30.505.10:FF:000006">
    <property type="entry name" value="Phosphatidylinositol 3-kinase regulatory subunit alpha"/>
    <property type="match status" value="1"/>
</dbReference>
<dbReference type="FunFam" id="3.30.505.10:FF:000014">
    <property type="entry name" value="Phosphatidylinositol 3-kinase regulatory subunit alpha"/>
    <property type="match status" value="1"/>
</dbReference>
<dbReference type="FunFam" id="2.30.30.40:FF:000075">
    <property type="entry name" value="phosphatidylinositol 3-kinase regulatory subunit alpha"/>
    <property type="match status" value="1"/>
</dbReference>
<dbReference type="FunFam" id="1.10.555.10:FF:000037">
    <property type="entry name" value="Phosphatidylinositol 3-kinase regulatory subunit beta"/>
    <property type="match status" value="1"/>
</dbReference>
<dbReference type="FunFam" id="1.10.287.1490:FF:000001">
    <property type="entry name" value="Putative phosphatidylinositol 3-kinase regulatory subunit alpha"/>
    <property type="match status" value="1"/>
</dbReference>
<dbReference type="Gene3D" id="1.10.287.1490">
    <property type="match status" value="1"/>
</dbReference>
<dbReference type="Gene3D" id="1.10.555.10">
    <property type="entry name" value="Rho GTPase activation protein"/>
    <property type="match status" value="1"/>
</dbReference>
<dbReference type="Gene3D" id="3.30.505.10">
    <property type="entry name" value="SH2 domain"/>
    <property type="match status" value="2"/>
</dbReference>
<dbReference type="Gene3D" id="2.30.30.40">
    <property type="entry name" value="SH3 Domains"/>
    <property type="match status" value="1"/>
</dbReference>
<dbReference type="InterPro" id="IPR032498">
    <property type="entry name" value="PI3K_P85_iSH2"/>
</dbReference>
<dbReference type="InterPro" id="IPR035586">
    <property type="entry name" value="PI3K_p85beta_SH3"/>
</dbReference>
<dbReference type="InterPro" id="IPR035020">
    <property type="entry name" value="PI3kinase_P85_cSH2"/>
</dbReference>
<dbReference type="InterPro" id="IPR035022">
    <property type="entry name" value="PI3kinase_P85_nSH2"/>
</dbReference>
<dbReference type="InterPro" id="IPR008936">
    <property type="entry name" value="Rho_GTPase_activation_prot"/>
</dbReference>
<dbReference type="InterPro" id="IPR000198">
    <property type="entry name" value="RhoGAP_dom"/>
</dbReference>
<dbReference type="InterPro" id="IPR000980">
    <property type="entry name" value="SH2"/>
</dbReference>
<dbReference type="InterPro" id="IPR036860">
    <property type="entry name" value="SH2_dom_sf"/>
</dbReference>
<dbReference type="InterPro" id="IPR036028">
    <property type="entry name" value="SH3-like_dom_sf"/>
</dbReference>
<dbReference type="InterPro" id="IPR001452">
    <property type="entry name" value="SH3_domain"/>
</dbReference>
<dbReference type="PANTHER" id="PTHR10155">
    <property type="entry name" value="PHOSPHATIDYLINOSITOL 3-KINASE REGULATORY SUBUNIT"/>
    <property type="match status" value="1"/>
</dbReference>
<dbReference type="PANTHER" id="PTHR10155:SF1">
    <property type="entry name" value="PHOSPHATIDYLINOSITOL 3-KINASE REGULATORY SUBUNIT BETA"/>
    <property type="match status" value="1"/>
</dbReference>
<dbReference type="Pfam" id="PF16454">
    <property type="entry name" value="PI3K_P85_iSH2"/>
    <property type="match status" value="1"/>
</dbReference>
<dbReference type="Pfam" id="PF00620">
    <property type="entry name" value="RhoGAP"/>
    <property type="match status" value="1"/>
</dbReference>
<dbReference type="Pfam" id="PF00017">
    <property type="entry name" value="SH2"/>
    <property type="match status" value="2"/>
</dbReference>
<dbReference type="PRINTS" id="PR00678">
    <property type="entry name" value="PI3KINASEP85"/>
</dbReference>
<dbReference type="PRINTS" id="PR00401">
    <property type="entry name" value="SH2DOMAIN"/>
</dbReference>
<dbReference type="SMART" id="SM00324">
    <property type="entry name" value="RhoGAP"/>
    <property type="match status" value="1"/>
</dbReference>
<dbReference type="SMART" id="SM00252">
    <property type="entry name" value="SH2"/>
    <property type="match status" value="2"/>
</dbReference>
<dbReference type="SMART" id="SM00326">
    <property type="entry name" value="SH3"/>
    <property type="match status" value="1"/>
</dbReference>
<dbReference type="SUPFAM" id="SSF48350">
    <property type="entry name" value="GTPase activation domain, GAP"/>
    <property type="match status" value="1"/>
</dbReference>
<dbReference type="SUPFAM" id="SSF55550">
    <property type="entry name" value="SH2 domain"/>
    <property type="match status" value="2"/>
</dbReference>
<dbReference type="SUPFAM" id="SSF50044">
    <property type="entry name" value="SH3-domain"/>
    <property type="match status" value="1"/>
</dbReference>
<dbReference type="PROSITE" id="PS50238">
    <property type="entry name" value="RHOGAP"/>
    <property type="match status" value="1"/>
</dbReference>
<dbReference type="PROSITE" id="PS50001">
    <property type="entry name" value="SH2"/>
    <property type="match status" value="2"/>
</dbReference>
<dbReference type="PROSITE" id="PS50002">
    <property type="entry name" value="SH3"/>
    <property type="match status" value="1"/>
</dbReference>
<feature type="chain" id="PRO_0000080762" description="Phosphatidylinositol 3-kinase regulatory subunit beta">
    <location>
        <begin position="1"/>
        <end position="724"/>
    </location>
</feature>
<feature type="domain" description="SH3" evidence="5">
    <location>
        <begin position="4"/>
        <end position="80"/>
    </location>
</feature>
<feature type="domain" description="Rho-GAP" evidence="3">
    <location>
        <begin position="109"/>
        <end position="291"/>
    </location>
</feature>
<feature type="domain" description="SH2 1" evidence="4">
    <location>
        <begin position="326"/>
        <end position="421"/>
    </location>
</feature>
<feature type="domain" description="SH2 2" evidence="4">
    <location>
        <begin position="618"/>
        <end position="712"/>
    </location>
</feature>
<feature type="region of interest" description="Disordered" evidence="6">
    <location>
        <begin position="81"/>
        <end position="118"/>
    </location>
</feature>
<feature type="region of interest" description="Disordered" evidence="6">
    <location>
        <begin position="250"/>
        <end position="275"/>
    </location>
</feature>
<feature type="region of interest" description="Disordered" evidence="6">
    <location>
        <begin position="290"/>
        <end position="319"/>
    </location>
</feature>
<feature type="compositionally biased region" description="Pro residues" evidence="6">
    <location>
        <begin position="87"/>
        <end position="98"/>
    </location>
</feature>
<feature type="compositionally biased region" description="Pro residues" evidence="6">
    <location>
        <begin position="254"/>
        <end position="264"/>
    </location>
</feature>
<feature type="compositionally biased region" description="Pro residues" evidence="6">
    <location>
        <begin position="296"/>
        <end position="306"/>
    </location>
</feature>
<feature type="site" description="Arginine finger; crucial for GTP hydrolysis by stabilizing the transition state" evidence="3">
    <location>
        <position position="144"/>
    </location>
</feature>
<feature type="modified residue" description="Phosphotyrosine" evidence="1">
    <location>
        <position position="460"/>
    </location>
</feature>
<feature type="modified residue" description="Phosphotyrosine" evidence="1">
    <location>
        <position position="601"/>
    </location>
</feature>
<feature type="modified residue" description="Phosphotyrosine" evidence="1">
    <location>
        <position position="651"/>
    </location>
</feature>
<feature type="helix" evidence="8">
    <location>
        <begin position="432"/>
        <end position="494"/>
    </location>
</feature>
<feature type="strand" evidence="8">
    <location>
        <begin position="495"/>
        <end position="497"/>
    </location>
</feature>
<feature type="helix" evidence="8">
    <location>
        <begin position="500"/>
        <end position="502"/>
    </location>
</feature>
<feature type="strand" evidence="8">
    <location>
        <begin position="503"/>
        <end position="507"/>
    </location>
</feature>
<feature type="strand" evidence="8">
    <location>
        <begin position="511"/>
        <end position="513"/>
    </location>
</feature>
<feature type="turn" evidence="8">
    <location>
        <begin position="514"/>
        <end position="518"/>
    </location>
</feature>
<feature type="helix" evidence="8">
    <location>
        <begin position="519"/>
        <end position="579"/>
    </location>
</feature>
<feature type="helix" evidence="8">
    <location>
        <begin position="584"/>
        <end position="591"/>
    </location>
</feature>